<dbReference type="EMBL" id="BX640447">
    <property type="protein sequence ID" value="CAE34081.1"/>
    <property type="molecule type" value="Genomic_DNA"/>
</dbReference>
<dbReference type="RefSeq" id="WP_003813570.1">
    <property type="nucleotide sequence ID" value="NC_002927.3"/>
</dbReference>
<dbReference type="KEGG" id="bbr:BB3587"/>
<dbReference type="eggNOG" id="COG5487">
    <property type="taxonomic scope" value="Bacteria"/>
</dbReference>
<dbReference type="HOGENOM" id="CLU_187346_0_1_4"/>
<dbReference type="Proteomes" id="UP000001027">
    <property type="component" value="Chromosome"/>
</dbReference>
<dbReference type="GO" id="GO:0005886">
    <property type="term" value="C:plasma membrane"/>
    <property type="evidence" value="ECO:0007669"/>
    <property type="project" value="UniProtKB-SubCell"/>
</dbReference>
<dbReference type="HAMAP" id="MF_01361">
    <property type="entry name" value="UPF0391"/>
    <property type="match status" value="1"/>
</dbReference>
<dbReference type="InterPro" id="IPR009760">
    <property type="entry name" value="DUF1328"/>
</dbReference>
<dbReference type="NCBIfam" id="NF010226">
    <property type="entry name" value="PRK13682.1-1"/>
    <property type="match status" value="1"/>
</dbReference>
<dbReference type="NCBIfam" id="NF010229">
    <property type="entry name" value="PRK13682.1-4"/>
    <property type="match status" value="1"/>
</dbReference>
<dbReference type="Pfam" id="PF07043">
    <property type="entry name" value="DUF1328"/>
    <property type="match status" value="1"/>
</dbReference>
<dbReference type="PIRSF" id="PIRSF036466">
    <property type="entry name" value="UCP036466"/>
    <property type="match status" value="1"/>
</dbReference>
<proteinExistence type="inferred from homology"/>
<gene>
    <name type="ordered locus">BB3587</name>
</gene>
<keyword id="KW-1003">Cell membrane</keyword>
<keyword id="KW-0472">Membrane</keyword>
<keyword id="KW-0812">Transmembrane</keyword>
<keyword id="KW-1133">Transmembrane helix</keyword>
<accession>Q7WGK2</accession>
<reference key="1">
    <citation type="journal article" date="2003" name="Nat. Genet.">
        <title>Comparative analysis of the genome sequences of Bordetella pertussis, Bordetella parapertussis and Bordetella bronchiseptica.</title>
        <authorList>
            <person name="Parkhill J."/>
            <person name="Sebaihia M."/>
            <person name="Preston A."/>
            <person name="Murphy L.D."/>
            <person name="Thomson N.R."/>
            <person name="Harris D.E."/>
            <person name="Holden M.T.G."/>
            <person name="Churcher C.M."/>
            <person name="Bentley S.D."/>
            <person name="Mungall K.L."/>
            <person name="Cerdeno-Tarraga A.-M."/>
            <person name="Temple L."/>
            <person name="James K.D."/>
            <person name="Harris B."/>
            <person name="Quail M.A."/>
            <person name="Achtman M."/>
            <person name="Atkin R."/>
            <person name="Baker S."/>
            <person name="Basham D."/>
            <person name="Bason N."/>
            <person name="Cherevach I."/>
            <person name="Chillingworth T."/>
            <person name="Collins M."/>
            <person name="Cronin A."/>
            <person name="Davis P."/>
            <person name="Doggett J."/>
            <person name="Feltwell T."/>
            <person name="Goble A."/>
            <person name="Hamlin N."/>
            <person name="Hauser H."/>
            <person name="Holroyd S."/>
            <person name="Jagels K."/>
            <person name="Leather S."/>
            <person name="Moule S."/>
            <person name="Norberczak H."/>
            <person name="O'Neil S."/>
            <person name="Ormond D."/>
            <person name="Price C."/>
            <person name="Rabbinowitsch E."/>
            <person name="Rutter S."/>
            <person name="Sanders M."/>
            <person name="Saunders D."/>
            <person name="Seeger K."/>
            <person name="Sharp S."/>
            <person name="Simmonds M."/>
            <person name="Skelton J."/>
            <person name="Squares R."/>
            <person name="Squares S."/>
            <person name="Stevens K."/>
            <person name="Unwin L."/>
            <person name="Whitehead S."/>
            <person name="Barrell B.G."/>
            <person name="Maskell D.J."/>
        </authorList>
    </citation>
    <scope>NUCLEOTIDE SEQUENCE [LARGE SCALE GENOMIC DNA]</scope>
    <source>
        <strain>ATCC BAA-588 / NCTC 13252 / RB50</strain>
    </source>
</reference>
<sequence>MLHYAVVFFVIAIIAAVLGFGGIAAGAAGIAKILFFVFLVLALLSILGGVFRK</sequence>
<feature type="chain" id="PRO_0000256713" description="UPF0391 membrane protein BB3587">
    <location>
        <begin position="1"/>
        <end position="53"/>
    </location>
</feature>
<feature type="transmembrane region" description="Helical" evidence="1">
    <location>
        <begin position="5"/>
        <end position="25"/>
    </location>
</feature>
<feature type="transmembrane region" description="Helical" evidence="1">
    <location>
        <begin position="30"/>
        <end position="50"/>
    </location>
</feature>
<protein>
    <recommendedName>
        <fullName evidence="1">UPF0391 membrane protein BB3587</fullName>
    </recommendedName>
</protein>
<name>Y3587_BORBR</name>
<evidence type="ECO:0000255" key="1">
    <source>
        <dbReference type="HAMAP-Rule" id="MF_01361"/>
    </source>
</evidence>
<comment type="subcellular location">
    <subcellularLocation>
        <location evidence="1">Cell membrane</location>
        <topology evidence="1">Multi-pass membrane protein</topology>
    </subcellularLocation>
</comment>
<comment type="similarity">
    <text evidence="1">Belongs to the UPF0391 family.</text>
</comment>
<organism>
    <name type="scientific">Bordetella bronchiseptica (strain ATCC BAA-588 / NCTC 13252 / RB50)</name>
    <name type="common">Alcaligenes bronchisepticus</name>
    <dbReference type="NCBI Taxonomy" id="257310"/>
    <lineage>
        <taxon>Bacteria</taxon>
        <taxon>Pseudomonadati</taxon>
        <taxon>Pseudomonadota</taxon>
        <taxon>Betaproteobacteria</taxon>
        <taxon>Burkholderiales</taxon>
        <taxon>Alcaligenaceae</taxon>
        <taxon>Bordetella</taxon>
    </lineage>
</organism>